<evidence type="ECO:0000255" key="1">
    <source>
        <dbReference type="HAMAP-Rule" id="MF_01631"/>
    </source>
</evidence>
<sequence>MLNVVILAAGLGKRMQSDLPKVLHTLAGRPMLDHVIGSARQLQPARIIVVVGHGADRVKAAFEGLPGLQFALQQPQHGTGHAVQQAVPQLLEGDGEDDVTLVLYGDVPLVQPATLQNLLQARGRGVAVLTEVLADSTGYGRIVRDAQGQVCRIVEHKDASEAERAIKEVNTGILAAPTARLKDWLGRITNDNAQGEYYLTDVIGLAVGDGVPVGAAQPGASWETLGVNSRVQQAQLERAWQSELARRQLEAGVTLADPARFDVRGTLSCGRDVFIDVGCVFEGTVTLGDGVRVGPHCVLRDVAVQAGARIEAYSHLQQAKVGQEAVVGPYARLRPGADLGERSHVGNFVEIKNSVLQADSKANHLAYIGDADIGARVNVGAGTITCNYDGVNKHRTVIEDDAFIGSDTQLVAPVRVGKGATLGAGTTLTKDAPAGQLTISRARQSTIEGWKRPVKKS</sequence>
<comment type="function">
    <text evidence="1">Catalyzes the last two sequential reactions in the de novo biosynthetic pathway for UDP-N-acetylglucosamine (UDP-GlcNAc). The C-terminal domain catalyzes the transfer of acetyl group from acetyl coenzyme A to glucosamine-1-phosphate (GlcN-1-P) to produce N-acetylglucosamine-1-phosphate (GlcNAc-1-P), which is converted into UDP-GlcNAc by the transfer of uridine 5-monophosphate (from uridine 5-triphosphate), a reaction catalyzed by the N-terminal domain.</text>
</comment>
<comment type="catalytic activity">
    <reaction evidence="1">
        <text>alpha-D-glucosamine 1-phosphate + acetyl-CoA = N-acetyl-alpha-D-glucosamine 1-phosphate + CoA + H(+)</text>
        <dbReference type="Rhea" id="RHEA:13725"/>
        <dbReference type="ChEBI" id="CHEBI:15378"/>
        <dbReference type="ChEBI" id="CHEBI:57287"/>
        <dbReference type="ChEBI" id="CHEBI:57288"/>
        <dbReference type="ChEBI" id="CHEBI:57776"/>
        <dbReference type="ChEBI" id="CHEBI:58516"/>
        <dbReference type="EC" id="2.3.1.157"/>
    </reaction>
</comment>
<comment type="catalytic activity">
    <reaction evidence="1">
        <text>N-acetyl-alpha-D-glucosamine 1-phosphate + UTP + H(+) = UDP-N-acetyl-alpha-D-glucosamine + diphosphate</text>
        <dbReference type="Rhea" id="RHEA:13509"/>
        <dbReference type="ChEBI" id="CHEBI:15378"/>
        <dbReference type="ChEBI" id="CHEBI:33019"/>
        <dbReference type="ChEBI" id="CHEBI:46398"/>
        <dbReference type="ChEBI" id="CHEBI:57705"/>
        <dbReference type="ChEBI" id="CHEBI:57776"/>
        <dbReference type="EC" id="2.7.7.23"/>
    </reaction>
</comment>
<comment type="cofactor">
    <cofactor evidence="1">
        <name>Mg(2+)</name>
        <dbReference type="ChEBI" id="CHEBI:18420"/>
    </cofactor>
    <text evidence="1">Binds 1 Mg(2+) ion per subunit.</text>
</comment>
<comment type="pathway">
    <text evidence="1">Nucleotide-sugar biosynthesis; UDP-N-acetyl-alpha-D-glucosamine biosynthesis; N-acetyl-alpha-D-glucosamine 1-phosphate from alpha-D-glucosamine 6-phosphate (route II): step 2/2.</text>
</comment>
<comment type="pathway">
    <text evidence="1">Nucleotide-sugar biosynthesis; UDP-N-acetyl-alpha-D-glucosamine biosynthesis; UDP-N-acetyl-alpha-D-glucosamine from N-acetyl-alpha-D-glucosamine 1-phosphate: step 1/1.</text>
</comment>
<comment type="pathway">
    <text evidence="1">Bacterial outer membrane biogenesis; LPS lipid A biosynthesis.</text>
</comment>
<comment type="subunit">
    <text evidence="1">Homotrimer.</text>
</comment>
<comment type="subcellular location">
    <subcellularLocation>
        <location evidence="1">Cytoplasm</location>
    </subcellularLocation>
</comment>
<comment type="similarity">
    <text evidence="1">In the N-terminal section; belongs to the N-acetylglucosamine-1-phosphate uridyltransferase family.</text>
</comment>
<comment type="similarity">
    <text evidence="1">In the C-terminal section; belongs to the transferase hexapeptide repeat family.</text>
</comment>
<feature type="chain" id="PRO_0000233740" description="Bifunctional protein GlmU">
    <location>
        <begin position="1"/>
        <end position="457"/>
    </location>
</feature>
<feature type="region of interest" description="Pyrophosphorylase" evidence="1">
    <location>
        <begin position="1"/>
        <end position="230"/>
    </location>
</feature>
<feature type="region of interest" description="Linker" evidence="1">
    <location>
        <begin position="231"/>
        <end position="251"/>
    </location>
</feature>
<feature type="region of interest" description="N-acetyltransferase" evidence="1">
    <location>
        <begin position="252"/>
        <end position="457"/>
    </location>
</feature>
<feature type="active site" description="Proton acceptor" evidence="1">
    <location>
        <position position="364"/>
    </location>
</feature>
<feature type="binding site" evidence="1">
    <location>
        <begin position="7"/>
        <end position="10"/>
    </location>
    <ligand>
        <name>UDP-N-acetyl-alpha-D-glucosamine</name>
        <dbReference type="ChEBI" id="CHEBI:57705"/>
    </ligand>
</feature>
<feature type="binding site" evidence="1">
    <location>
        <position position="21"/>
    </location>
    <ligand>
        <name>UDP-N-acetyl-alpha-D-glucosamine</name>
        <dbReference type="ChEBI" id="CHEBI:57705"/>
    </ligand>
</feature>
<feature type="binding site" evidence="1">
    <location>
        <position position="73"/>
    </location>
    <ligand>
        <name>UDP-N-acetyl-alpha-D-glucosamine</name>
        <dbReference type="ChEBI" id="CHEBI:57705"/>
    </ligand>
</feature>
<feature type="binding site" evidence="1">
    <location>
        <begin position="78"/>
        <end position="79"/>
    </location>
    <ligand>
        <name>UDP-N-acetyl-alpha-D-glucosamine</name>
        <dbReference type="ChEBI" id="CHEBI:57705"/>
    </ligand>
</feature>
<feature type="binding site" evidence="1">
    <location>
        <begin position="104"/>
        <end position="106"/>
    </location>
    <ligand>
        <name>UDP-N-acetyl-alpha-D-glucosamine</name>
        <dbReference type="ChEBI" id="CHEBI:57705"/>
    </ligand>
</feature>
<feature type="binding site" evidence="1">
    <location>
        <position position="106"/>
    </location>
    <ligand>
        <name>Mg(2+)</name>
        <dbReference type="ChEBI" id="CHEBI:18420"/>
    </ligand>
</feature>
<feature type="binding site" evidence="1">
    <location>
        <position position="140"/>
    </location>
    <ligand>
        <name>UDP-N-acetyl-alpha-D-glucosamine</name>
        <dbReference type="ChEBI" id="CHEBI:57705"/>
    </ligand>
</feature>
<feature type="binding site" evidence="1">
    <location>
        <position position="155"/>
    </location>
    <ligand>
        <name>UDP-N-acetyl-alpha-D-glucosamine</name>
        <dbReference type="ChEBI" id="CHEBI:57705"/>
    </ligand>
</feature>
<feature type="binding site" evidence="1">
    <location>
        <position position="170"/>
    </location>
    <ligand>
        <name>UDP-N-acetyl-alpha-D-glucosamine</name>
        <dbReference type="ChEBI" id="CHEBI:57705"/>
    </ligand>
</feature>
<feature type="binding site" evidence="1">
    <location>
        <position position="228"/>
    </location>
    <ligand>
        <name>Mg(2+)</name>
        <dbReference type="ChEBI" id="CHEBI:18420"/>
    </ligand>
</feature>
<feature type="binding site" evidence="1">
    <location>
        <position position="228"/>
    </location>
    <ligand>
        <name>UDP-N-acetyl-alpha-D-glucosamine</name>
        <dbReference type="ChEBI" id="CHEBI:57705"/>
    </ligand>
</feature>
<feature type="binding site" evidence="1">
    <location>
        <position position="334"/>
    </location>
    <ligand>
        <name>UDP-N-acetyl-alpha-D-glucosamine</name>
        <dbReference type="ChEBI" id="CHEBI:57705"/>
    </ligand>
</feature>
<feature type="binding site" evidence="1">
    <location>
        <position position="352"/>
    </location>
    <ligand>
        <name>UDP-N-acetyl-alpha-D-glucosamine</name>
        <dbReference type="ChEBI" id="CHEBI:57705"/>
    </ligand>
</feature>
<feature type="binding site" evidence="1">
    <location>
        <position position="367"/>
    </location>
    <ligand>
        <name>UDP-N-acetyl-alpha-D-glucosamine</name>
        <dbReference type="ChEBI" id="CHEBI:57705"/>
    </ligand>
</feature>
<feature type="binding site" evidence="1">
    <location>
        <position position="378"/>
    </location>
    <ligand>
        <name>UDP-N-acetyl-alpha-D-glucosamine</name>
        <dbReference type="ChEBI" id="CHEBI:57705"/>
    </ligand>
</feature>
<feature type="binding site" evidence="1">
    <location>
        <position position="381"/>
    </location>
    <ligand>
        <name>acetyl-CoA</name>
        <dbReference type="ChEBI" id="CHEBI:57288"/>
    </ligand>
</feature>
<feature type="binding site" evidence="1">
    <location>
        <begin position="387"/>
        <end position="388"/>
    </location>
    <ligand>
        <name>acetyl-CoA</name>
        <dbReference type="ChEBI" id="CHEBI:57288"/>
    </ligand>
</feature>
<feature type="binding site" evidence="1">
    <location>
        <position position="406"/>
    </location>
    <ligand>
        <name>acetyl-CoA</name>
        <dbReference type="ChEBI" id="CHEBI:57288"/>
    </ligand>
</feature>
<feature type="binding site" evidence="1">
    <location>
        <position position="424"/>
    </location>
    <ligand>
        <name>acetyl-CoA</name>
        <dbReference type="ChEBI" id="CHEBI:57288"/>
    </ligand>
</feature>
<feature type="binding site" evidence="1">
    <location>
        <position position="441"/>
    </location>
    <ligand>
        <name>acetyl-CoA</name>
        <dbReference type="ChEBI" id="CHEBI:57288"/>
    </ligand>
</feature>
<protein>
    <recommendedName>
        <fullName evidence="1">Bifunctional protein GlmU</fullName>
    </recommendedName>
    <domain>
        <recommendedName>
            <fullName evidence="1">UDP-N-acetylglucosamine pyrophosphorylase</fullName>
            <ecNumber evidence="1">2.7.7.23</ecNumber>
        </recommendedName>
        <alternativeName>
            <fullName evidence="1">N-acetylglucosamine-1-phosphate uridyltransferase</fullName>
        </alternativeName>
    </domain>
    <domain>
        <recommendedName>
            <fullName evidence="1">Glucosamine-1-phosphate N-acetyltransferase</fullName>
            <ecNumber evidence="1">2.3.1.157</ecNumber>
        </recommendedName>
    </domain>
</protein>
<accession>Q7WE21</accession>
<name>GLMU_BORBR</name>
<keyword id="KW-0012">Acyltransferase</keyword>
<keyword id="KW-0133">Cell shape</keyword>
<keyword id="KW-0961">Cell wall biogenesis/degradation</keyword>
<keyword id="KW-0963">Cytoplasm</keyword>
<keyword id="KW-0460">Magnesium</keyword>
<keyword id="KW-0479">Metal-binding</keyword>
<keyword id="KW-0511">Multifunctional enzyme</keyword>
<keyword id="KW-0548">Nucleotidyltransferase</keyword>
<keyword id="KW-0573">Peptidoglycan synthesis</keyword>
<keyword id="KW-0677">Repeat</keyword>
<keyword id="KW-0808">Transferase</keyword>
<organism>
    <name type="scientific">Bordetella bronchiseptica (strain ATCC BAA-588 / NCTC 13252 / RB50)</name>
    <name type="common">Alcaligenes bronchisepticus</name>
    <dbReference type="NCBI Taxonomy" id="257310"/>
    <lineage>
        <taxon>Bacteria</taxon>
        <taxon>Pseudomonadati</taxon>
        <taxon>Pseudomonadota</taxon>
        <taxon>Betaproteobacteria</taxon>
        <taxon>Burkholderiales</taxon>
        <taxon>Alcaligenaceae</taxon>
        <taxon>Bordetella</taxon>
    </lineage>
</organism>
<reference key="1">
    <citation type="journal article" date="2003" name="Nat. Genet.">
        <title>Comparative analysis of the genome sequences of Bordetella pertussis, Bordetella parapertussis and Bordetella bronchiseptica.</title>
        <authorList>
            <person name="Parkhill J."/>
            <person name="Sebaihia M."/>
            <person name="Preston A."/>
            <person name="Murphy L.D."/>
            <person name="Thomson N.R."/>
            <person name="Harris D.E."/>
            <person name="Holden M.T.G."/>
            <person name="Churcher C.M."/>
            <person name="Bentley S.D."/>
            <person name="Mungall K.L."/>
            <person name="Cerdeno-Tarraga A.-M."/>
            <person name="Temple L."/>
            <person name="James K.D."/>
            <person name="Harris B."/>
            <person name="Quail M.A."/>
            <person name="Achtman M."/>
            <person name="Atkin R."/>
            <person name="Baker S."/>
            <person name="Basham D."/>
            <person name="Bason N."/>
            <person name="Cherevach I."/>
            <person name="Chillingworth T."/>
            <person name="Collins M."/>
            <person name="Cronin A."/>
            <person name="Davis P."/>
            <person name="Doggett J."/>
            <person name="Feltwell T."/>
            <person name="Goble A."/>
            <person name="Hamlin N."/>
            <person name="Hauser H."/>
            <person name="Holroyd S."/>
            <person name="Jagels K."/>
            <person name="Leather S."/>
            <person name="Moule S."/>
            <person name="Norberczak H."/>
            <person name="O'Neil S."/>
            <person name="Ormond D."/>
            <person name="Price C."/>
            <person name="Rabbinowitsch E."/>
            <person name="Rutter S."/>
            <person name="Sanders M."/>
            <person name="Saunders D."/>
            <person name="Seeger K."/>
            <person name="Sharp S."/>
            <person name="Simmonds M."/>
            <person name="Skelton J."/>
            <person name="Squares R."/>
            <person name="Squares S."/>
            <person name="Stevens K."/>
            <person name="Unwin L."/>
            <person name="Whitehead S."/>
            <person name="Barrell B.G."/>
            <person name="Maskell D.J."/>
        </authorList>
    </citation>
    <scope>NUCLEOTIDE SEQUENCE [LARGE SCALE GENOMIC DNA]</scope>
    <source>
        <strain>ATCC BAA-588 / NCTC 13252 / RB50</strain>
    </source>
</reference>
<gene>
    <name evidence="1" type="primary">glmU</name>
    <name type="ordered locus">BB4817</name>
</gene>
<dbReference type="EC" id="2.7.7.23" evidence="1"/>
<dbReference type="EC" id="2.3.1.157" evidence="1"/>
<dbReference type="EMBL" id="BX640451">
    <property type="protein sequence ID" value="CAE35180.1"/>
    <property type="molecule type" value="Genomic_DNA"/>
</dbReference>
<dbReference type="RefSeq" id="WP_003815721.1">
    <property type="nucleotide sequence ID" value="NC_002927.3"/>
</dbReference>
<dbReference type="SMR" id="Q7WE21"/>
<dbReference type="GeneID" id="93206026"/>
<dbReference type="KEGG" id="bbr:BB4817"/>
<dbReference type="eggNOG" id="COG1207">
    <property type="taxonomic scope" value="Bacteria"/>
</dbReference>
<dbReference type="HOGENOM" id="CLU_029499_15_2_4"/>
<dbReference type="UniPathway" id="UPA00113">
    <property type="reaction ID" value="UER00532"/>
</dbReference>
<dbReference type="UniPathway" id="UPA00113">
    <property type="reaction ID" value="UER00533"/>
</dbReference>
<dbReference type="UniPathway" id="UPA00973"/>
<dbReference type="Proteomes" id="UP000001027">
    <property type="component" value="Chromosome"/>
</dbReference>
<dbReference type="GO" id="GO:0005737">
    <property type="term" value="C:cytoplasm"/>
    <property type="evidence" value="ECO:0007669"/>
    <property type="project" value="UniProtKB-SubCell"/>
</dbReference>
<dbReference type="GO" id="GO:0016020">
    <property type="term" value="C:membrane"/>
    <property type="evidence" value="ECO:0007669"/>
    <property type="project" value="GOC"/>
</dbReference>
<dbReference type="GO" id="GO:0019134">
    <property type="term" value="F:glucosamine-1-phosphate N-acetyltransferase activity"/>
    <property type="evidence" value="ECO:0007669"/>
    <property type="project" value="UniProtKB-UniRule"/>
</dbReference>
<dbReference type="GO" id="GO:0000287">
    <property type="term" value="F:magnesium ion binding"/>
    <property type="evidence" value="ECO:0007669"/>
    <property type="project" value="UniProtKB-UniRule"/>
</dbReference>
<dbReference type="GO" id="GO:0003977">
    <property type="term" value="F:UDP-N-acetylglucosamine diphosphorylase activity"/>
    <property type="evidence" value="ECO:0007669"/>
    <property type="project" value="UniProtKB-UniRule"/>
</dbReference>
<dbReference type="GO" id="GO:0000902">
    <property type="term" value="P:cell morphogenesis"/>
    <property type="evidence" value="ECO:0007669"/>
    <property type="project" value="UniProtKB-UniRule"/>
</dbReference>
<dbReference type="GO" id="GO:0071555">
    <property type="term" value="P:cell wall organization"/>
    <property type="evidence" value="ECO:0007669"/>
    <property type="project" value="UniProtKB-KW"/>
</dbReference>
<dbReference type="GO" id="GO:0009245">
    <property type="term" value="P:lipid A biosynthetic process"/>
    <property type="evidence" value="ECO:0007669"/>
    <property type="project" value="UniProtKB-UniRule"/>
</dbReference>
<dbReference type="GO" id="GO:0009252">
    <property type="term" value="P:peptidoglycan biosynthetic process"/>
    <property type="evidence" value="ECO:0007669"/>
    <property type="project" value="UniProtKB-UniRule"/>
</dbReference>
<dbReference type="GO" id="GO:0008360">
    <property type="term" value="P:regulation of cell shape"/>
    <property type="evidence" value="ECO:0007669"/>
    <property type="project" value="UniProtKB-KW"/>
</dbReference>
<dbReference type="GO" id="GO:0006048">
    <property type="term" value="P:UDP-N-acetylglucosamine biosynthetic process"/>
    <property type="evidence" value="ECO:0007669"/>
    <property type="project" value="UniProtKB-UniPathway"/>
</dbReference>
<dbReference type="CDD" id="cd02540">
    <property type="entry name" value="GT2_GlmU_N_bac"/>
    <property type="match status" value="1"/>
</dbReference>
<dbReference type="CDD" id="cd03353">
    <property type="entry name" value="LbH_GlmU_C"/>
    <property type="match status" value="1"/>
</dbReference>
<dbReference type="Gene3D" id="2.160.10.10">
    <property type="entry name" value="Hexapeptide repeat proteins"/>
    <property type="match status" value="1"/>
</dbReference>
<dbReference type="Gene3D" id="3.90.550.10">
    <property type="entry name" value="Spore Coat Polysaccharide Biosynthesis Protein SpsA, Chain A"/>
    <property type="match status" value="1"/>
</dbReference>
<dbReference type="HAMAP" id="MF_01631">
    <property type="entry name" value="GlmU"/>
    <property type="match status" value="1"/>
</dbReference>
<dbReference type="InterPro" id="IPR005882">
    <property type="entry name" value="Bifunctional_GlmU"/>
</dbReference>
<dbReference type="InterPro" id="IPR050065">
    <property type="entry name" value="GlmU-like"/>
</dbReference>
<dbReference type="InterPro" id="IPR038009">
    <property type="entry name" value="GlmU_C_LbH"/>
</dbReference>
<dbReference type="InterPro" id="IPR001451">
    <property type="entry name" value="Hexapep"/>
</dbReference>
<dbReference type="InterPro" id="IPR018357">
    <property type="entry name" value="Hexapep_transf_CS"/>
</dbReference>
<dbReference type="InterPro" id="IPR025877">
    <property type="entry name" value="MobA-like_NTP_Trfase"/>
</dbReference>
<dbReference type="InterPro" id="IPR029044">
    <property type="entry name" value="Nucleotide-diphossugar_trans"/>
</dbReference>
<dbReference type="InterPro" id="IPR011004">
    <property type="entry name" value="Trimer_LpxA-like_sf"/>
</dbReference>
<dbReference type="NCBIfam" id="TIGR01173">
    <property type="entry name" value="glmU"/>
    <property type="match status" value="1"/>
</dbReference>
<dbReference type="PANTHER" id="PTHR43584:SF3">
    <property type="entry name" value="BIFUNCTIONAL PROTEIN GLMU"/>
    <property type="match status" value="1"/>
</dbReference>
<dbReference type="PANTHER" id="PTHR43584">
    <property type="entry name" value="NUCLEOTIDYL TRANSFERASE"/>
    <property type="match status" value="1"/>
</dbReference>
<dbReference type="Pfam" id="PF00132">
    <property type="entry name" value="Hexapep"/>
    <property type="match status" value="2"/>
</dbReference>
<dbReference type="Pfam" id="PF12804">
    <property type="entry name" value="NTP_transf_3"/>
    <property type="match status" value="1"/>
</dbReference>
<dbReference type="SUPFAM" id="SSF53448">
    <property type="entry name" value="Nucleotide-diphospho-sugar transferases"/>
    <property type="match status" value="1"/>
</dbReference>
<dbReference type="SUPFAM" id="SSF51161">
    <property type="entry name" value="Trimeric LpxA-like enzymes"/>
    <property type="match status" value="1"/>
</dbReference>
<dbReference type="PROSITE" id="PS00101">
    <property type="entry name" value="HEXAPEP_TRANSFERASES"/>
    <property type="match status" value="1"/>
</dbReference>
<proteinExistence type="inferred from homology"/>